<evidence type="ECO:0000255" key="1">
    <source>
        <dbReference type="HAMAP-Rule" id="MF_00741"/>
    </source>
</evidence>
<reference key="1">
    <citation type="journal article" date="2007" name="Nat. Biotechnol.">
        <title>Complete genome sequence of the myxobacterium Sorangium cellulosum.</title>
        <authorList>
            <person name="Schneiker S."/>
            <person name="Perlova O."/>
            <person name="Kaiser O."/>
            <person name="Gerth K."/>
            <person name="Alici A."/>
            <person name="Altmeyer M.O."/>
            <person name="Bartels D."/>
            <person name="Bekel T."/>
            <person name="Beyer S."/>
            <person name="Bode E."/>
            <person name="Bode H.B."/>
            <person name="Bolten C.J."/>
            <person name="Choudhuri J.V."/>
            <person name="Doss S."/>
            <person name="Elnakady Y.A."/>
            <person name="Frank B."/>
            <person name="Gaigalat L."/>
            <person name="Goesmann A."/>
            <person name="Groeger C."/>
            <person name="Gross F."/>
            <person name="Jelsbak L."/>
            <person name="Jelsbak L."/>
            <person name="Kalinowski J."/>
            <person name="Kegler C."/>
            <person name="Knauber T."/>
            <person name="Konietzny S."/>
            <person name="Kopp M."/>
            <person name="Krause L."/>
            <person name="Krug D."/>
            <person name="Linke B."/>
            <person name="Mahmud T."/>
            <person name="Martinez-Arias R."/>
            <person name="McHardy A.C."/>
            <person name="Merai M."/>
            <person name="Meyer F."/>
            <person name="Mormann S."/>
            <person name="Munoz-Dorado J."/>
            <person name="Perez J."/>
            <person name="Pradella S."/>
            <person name="Rachid S."/>
            <person name="Raddatz G."/>
            <person name="Rosenau F."/>
            <person name="Rueckert C."/>
            <person name="Sasse F."/>
            <person name="Scharfe M."/>
            <person name="Schuster S.C."/>
            <person name="Suen G."/>
            <person name="Treuner-Lange A."/>
            <person name="Velicer G.J."/>
            <person name="Vorholter F.-J."/>
            <person name="Weissman K.J."/>
            <person name="Welch R.D."/>
            <person name="Wenzel S.C."/>
            <person name="Whitworth D.E."/>
            <person name="Wilhelm S."/>
            <person name="Wittmann C."/>
            <person name="Bloecker H."/>
            <person name="Puehler A."/>
            <person name="Mueller R."/>
        </authorList>
    </citation>
    <scope>NUCLEOTIDE SEQUENCE [LARGE SCALE GENOMIC DNA]</scope>
    <source>
        <strain>So ce56</strain>
    </source>
</reference>
<feature type="chain" id="PRO_1000083466" description="Phosphoribosylformylglycinamidine cyclo-ligase">
    <location>
        <begin position="1"/>
        <end position="348"/>
    </location>
</feature>
<keyword id="KW-0067">ATP-binding</keyword>
<keyword id="KW-0963">Cytoplasm</keyword>
<keyword id="KW-0436">Ligase</keyword>
<keyword id="KW-0547">Nucleotide-binding</keyword>
<keyword id="KW-0658">Purine biosynthesis</keyword>
<keyword id="KW-1185">Reference proteome</keyword>
<dbReference type="EC" id="6.3.3.1" evidence="1"/>
<dbReference type="EMBL" id="AM746676">
    <property type="protein sequence ID" value="CAN98694.1"/>
    <property type="molecule type" value="Genomic_DNA"/>
</dbReference>
<dbReference type="RefSeq" id="WP_012241133.1">
    <property type="nucleotide sequence ID" value="NC_010162.1"/>
</dbReference>
<dbReference type="SMR" id="A9FYZ4"/>
<dbReference type="STRING" id="448385.sce8524"/>
<dbReference type="KEGG" id="scl:sce8524"/>
<dbReference type="eggNOG" id="COG0150">
    <property type="taxonomic scope" value="Bacteria"/>
</dbReference>
<dbReference type="HOGENOM" id="CLU_047116_0_0_7"/>
<dbReference type="OrthoDB" id="9777881at2"/>
<dbReference type="BioCyc" id="SCEL448385:SCE_RS43675-MONOMER"/>
<dbReference type="UniPathway" id="UPA00074">
    <property type="reaction ID" value="UER00129"/>
</dbReference>
<dbReference type="Proteomes" id="UP000002139">
    <property type="component" value="Chromosome"/>
</dbReference>
<dbReference type="GO" id="GO:0005829">
    <property type="term" value="C:cytosol"/>
    <property type="evidence" value="ECO:0007669"/>
    <property type="project" value="TreeGrafter"/>
</dbReference>
<dbReference type="GO" id="GO:0005524">
    <property type="term" value="F:ATP binding"/>
    <property type="evidence" value="ECO:0007669"/>
    <property type="project" value="UniProtKB-KW"/>
</dbReference>
<dbReference type="GO" id="GO:0004637">
    <property type="term" value="F:phosphoribosylamine-glycine ligase activity"/>
    <property type="evidence" value="ECO:0007669"/>
    <property type="project" value="TreeGrafter"/>
</dbReference>
<dbReference type="GO" id="GO:0004641">
    <property type="term" value="F:phosphoribosylformylglycinamidine cyclo-ligase activity"/>
    <property type="evidence" value="ECO:0007669"/>
    <property type="project" value="UniProtKB-UniRule"/>
</dbReference>
<dbReference type="GO" id="GO:0006189">
    <property type="term" value="P:'de novo' IMP biosynthetic process"/>
    <property type="evidence" value="ECO:0007669"/>
    <property type="project" value="UniProtKB-UniRule"/>
</dbReference>
<dbReference type="GO" id="GO:0046084">
    <property type="term" value="P:adenine biosynthetic process"/>
    <property type="evidence" value="ECO:0007669"/>
    <property type="project" value="TreeGrafter"/>
</dbReference>
<dbReference type="CDD" id="cd02196">
    <property type="entry name" value="PurM"/>
    <property type="match status" value="1"/>
</dbReference>
<dbReference type="FunFam" id="3.30.1330.10:FF:000001">
    <property type="entry name" value="Phosphoribosylformylglycinamidine cyclo-ligase"/>
    <property type="match status" value="1"/>
</dbReference>
<dbReference type="FunFam" id="3.90.650.10:FF:000011">
    <property type="entry name" value="Phosphoribosylformylglycinamidine cyclo-ligase"/>
    <property type="match status" value="1"/>
</dbReference>
<dbReference type="Gene3D" id="3.90.650.10">
    <property type="entry name" value="PurM-like C-terminal domain"/>
    <property type="match status" value="1"/>
</dbReference>
<dbReference type="Gene3D" id="3.30.1330.10">
    <property type="entry name" value="PurM-like, N-terminal domain"/>
    <property type="match status" value="1"/>
</dbReference>
<dbReference type="HAMAP" id="MF_00741">
    <property type="entry name" value="AIRS"/>
    <property type="match status" value="1"/>
</dbReference>
<dbReference type="InterPro" id="IPR010918">
    <property type="entry name" value="PurM-like_C_dom"/>
</dbReference>
<dbReference type="InterPro" id="IPR036676">
    <property type="entry name" value="PurM-like_C_sf"/>
</dbReference>
<dbReference type="InterPro" id="IPR016188">
    <property type="entry name" value="PurM-like_N"/>
</dbReference>
<dbReference type="InterPro" id="IPR036921">
    <property type="entry name" value="PurM-like_N_sf"/>
</dbReference>
<dbReference type="InterPro" id="IPR004733">
    <property type="entry name" value="PurM_cligase"/>
</dbReference>
<dbReference type="NCBIfam" id="TIGR00878">
    <property type="entry name" value="purM"/>
    <property type="match status" value="1"/>
</dbReference>
<dbReference type="PANTHER" id="PTHR10520:SF12">
    <property type="entry name" value="TRIFUNCTIONAL PURINE BIOSYNTHETIC PROTEIN ADENOSINE-3"/>
    <property type="match status" value="1"/>
</dbReference>
<dbReference type="PANTHER" id="PTHR10520">
    <property type="entry name" value="TRIFUNCTIONAL PURINE BIOSYNTHETIC PROTEIN ADENOSINE-3-RELATED"/>
    <property type="match status" value="1"/>
</dbReference>
<dbReference type="Pfam" id="PF00586">
    <property type="entry name" value="AIRS"/>
    <property type="match status" value="1"/>
</dbReference>
<dbReference type="Pfam" id="PF02769">
    <property type="entry name" value="AIRS_C"/>
    <property type="match status" value="1"/>
</dbReference>
<dbReference type="SUPFAM" id="SSF56042">
    <property type="entry name" value="PurM C-terminal domain-like"/>
    <property type="match status" value="1"/>
</dbReference>
<dbReference type="SUPFAM" id="SSF55326">
    <property type="entry name" value="PurM N-terminal domain-like"/>
    <property type="match status" value="1"/>
</dbReference>
<accession>A9FYZ4</accession>
<gene>
    <name evidence="1" type="primary">purM</name>
    <name type="ordered locus">sce8524</name>
</gene>
<sequence>MSVTYREAGVDIDAGDALVERIKRLAKPTRIPEVLADVGGFAGLCALPGGLSEPVLVSGTDGVGTKLKVAFATGVHDTVGIDLVAMCVNDVLTVGARPLFFLDYFATGKLDVDVGEAVVRGIAEGCKQAGCALIGGETAELPGMYADGEYDLAGFAVGVVERSRILDGKRIAAGDAVIGVASSGLHSNGFSLARRVLEKEMGLTMSDRVADLGGTVGEALLTPTRIYARAITALLAACGDAVRGLSHITGGGLPGNLPRVLPDGLGARLDLGSYQRPAVFQVLQRGGPVEEAEMRRTFNLGVGLVAVVEKGAADRAIEAFAKSGEQAWVLGEVVSVGDVPFEERVLFG</sequence>
<comment type="catalytic activity">
    <reaction evidence="1">
        <text>2-formamido-N(1)-(5-O-phospho-beta-D-ribosyl)acetamidine + ATP = 5-amino-1-(5-phospho-beta-D-ribosyl)imidazole + ADP + phosphate + H(+)</text>
        <dbReference type="Rhea" id="RHEA:23032"/>
        <dbReference type="ChEBI" id="CHEBI:15378"/>
        <dbReference type="ChEBI" id="CHEBI:30616"/>
        <dbReference type="ChEBI" id="CHEBI:43474"/>
        <dbReference type="ChEBI" id="CHEBI:137981"/>
        <dbReference type="ChEBI" id="CHEBI:147287"/>
        <dbReference type="ChEBI" id="CHEBI:456216"/>
        <dbReference type="EC" id="6.3.3.1"/>
    </reaction>
</comment>
<comment type="pathway">
    <text evidence="1">Purine metabolism; IMP biosynthesis via de novo pathway; 5-amino-1-(5-phospho-D-ribosyl)imidazole from N(2)-formyl-N(1)-(5-phospho-D-ribosyl)glycinamide: step 2/2.</text>
</comment>
<comment type="subcellular location">
    <subcellularLocation>
        <location evidence="1">Cytoplasm</location>
    </subcellularLocation>
</comment>
<comment type="similarity">
    <text evidence="1">Belongs to the AIR synthase family.</text>
</comment>
<protein>
    <recommendedName>
        <fullName evidence="1">Phosphoribosylformylglycinamidine cyclo-ligase</fullName>
        <ecNumber evidence="1">6.3.3.1</ecNumber>
    </recommendedName>
    <alternativeName>
        <fullName evidence="1">AIR synthase</fullName>
    </alternativeName>
    <alternativeName>
        <fullName evidence="1">AIRS</fullName>
    </alternativeName>
    <alternativeName>
        <fullName evidence="1">Phosphoribosyl-aminoimidazole synthetase</fullName>
    </alternativeName>
</protein>
<organism>
    <name type="scientific">Sorangium cellulosum (strain So ce56)</name>
    <name type="common">Polyangium cellulosum (strain So ce56)</name>
    <dbReference type="NCBI Taxonomy" id="448385"/>
    <lineage>
        <taxon>Bacteria</taxon>
        <taxon>Pseudomonadati</taxon>
        <taxon>Myxococcota</taxon>
        <taxon>Polyangia</taxon>
        <taxon>Polyangiales</taxon>
        <taxon>Polyangiaceae</taxon>
        <taxon>Sorangium</taxon>
    </lineage>
</organism>
<proteinExistence type="inferred from homology"/>
<name>PUR5_SORC5</name>